<accession>Q15506</accession>
<accession>B2R4F2</accession>
<accession>Q9BXF7</accession>
<organism>
    <name type="scientific">Homo sapiens</name>
    <name type="common">Human</name>
    <dbReference type="NCBI Taxonomy" id="9606"/>
    <lineage>
        <taxon>Eukaryota</taxon>
        <taxon>Metazoa</taxon>
        <taxon>Chordata</taxon>
        <taxon>Craniata</taxon>
        <taxon>Vertebrata</taxon>
        <taxon>Euteleostomi</taxon>
        <taxon>Mammalia</taxon>
        <taxon>Eutheria</taxon>
        <taxon>Euarchontoglires</taxon>
        <taxon>Primates</taxon>
        <taxon>Haplorrhini</taxon>
        <taxon>Catarrhini</taxon>
        <taxon>Hominidae</taxon>
        <taxon>Homo</taxon>
    </lineage>
</organism>
<gene>
    <name type="primary">SPA17</name>
    <name type="synonym">SP17</name>
</gene>
<protein>
    <recommendedName>
        <fullName>Sperm surface protein Sp17</fullName>
    </recommendedName>
    <alternativeName>
        <fullName>Cancer/testis antigen 22</fullName>
        <shortName>CT22</shortName>
    </alternativeName>
    <alternativeName>
        <fullName>Sp17-1</fullName>
    </alternativeName>
    <alternativeName>
        <fullName>Sperm autoantigenic protein 17</fullName>
        <shortName>Sperm protein 17</shortName>
    </alternativeName>
</protein>
<proteinExistence type="evidence at protein level"/>
<keyword id="KW-0002">3D-structure</keyword>
<keyword id="KW-0472">Membrane</keyword>
<keyword id="KW-1267">Proteomics identification</keyword>
<keyword id="KW-1185">Reference proteome</keyword>
<dbReference type="EMBL" id="Z48570">
    <property type="protein sequence ID" value="CAA88459.1"/>
    <property type="molecule type" value="mRNA"/>
</dbReference>
<dbReference type="EMBL" id="AF334735">
    <property type="protein sequence ID" value="AAK20878.1"/>
    <property type="molecule type" value="mRNA"/>
</dbReference>
<dbReference type="EMBL" id="AF334810">
    <property type="protein sequence ID" value="AAK28125.1"/>
    <property type="molecule type" value="Genomic_DNA"/>
</dbReference>
<dbReference type="EMBL" id="AK311806">
    <property type="protein sequence ID" value="BAG34749.1"/>
    <property type="molecule type" value="mRNA"/>
</dbReference>
<dbReference type="EMBL" id="CH471065">
    <property type="protein sequence ID" value="EAW67592.1"/>
    <property type="molecule type" value="Genomic_DNA"/>
</dbReference>
<dbReference type="EMBL" id="BC032457">
    <property type="protein sequence ID" value="AAH32457.1"/>
    <property type="molecule type" value="mRNA"/>
</dbReference>
<dbReference type="CCDS" id="CCDS8450.1"/>
<dbReference type="PIR" id="I38243">
    <property type="entry name" value="I38243"/>
</dbReference>
<dbReference type="RefSeq" id="NP_059121.1">
    <property type="nucleotide sequence ID" value="NM_017425.4"/>
</dbReference>
<dbReference type="RefSeq" id="XP_011541172.1">
    <property type="nucleotide sequence ID" value="XM_011542870.3"/>
</dbReference>
<dbReference type="RefSeq" id="XP_024304351.1">
    <property type="nucleotide sequence ID" value="XM_024448583.2"/>
</dbReference>
<dbReference type="RefSeq" id="XP_054225109.1">
    <property type="nucleotide sequence ID" value="XM_054369134.1"/>
</dbReference>
<dbReference type="RefSeq" id="XP_054225110.1">
    <property type="nucleotide sequence ID" value="XM_054369135.1"/>
</dbReference>
<dbReference type="PDB" id="8J07">
    <property type="method" value="EM"/>
    <property type="resolution" value="4.10 A"/>
    <property type="chains" value="K/L/k/l=1-151"/>
</dbReference>
<dbReference type="PDBsum" id="8J07"/>
<dbReference type="EMDB" id="EMD-35888"/>
<dbReference type="SMR" id="Q15506"/>
<dbReference type="BioGRID" id="119741">
    <property type="interactions" value="17"/>
</dbReference>
<dbReference type="FunCoup" id="Q15506">
    <property type="interactions" value="65"/>
</dbReference>
<dbReference type="IntAct" id="Q15506">
    <property type="interactions" value="12"/>
</dbReference>
<dbReference type="MINT" id="Q15506"/>
<dbReference type="STRING" id="9606.ENSP00000432305"/>
<dbReference type="GlyGen" id="Q15506">
    <property type="glycosylation" value="1 site, 1 O-linked glycan (1 site)"/>
</dbReference>
<dbReference type="iPTMnet" id="Q15506"/>
<dbReference type="PhosphoSitePlus" id="Q15506"/>
<dbReference type="BioMuta" id="SPA17"/>
<dbReference type="DMDM" id="2833264"/>
<dbReference type="jPOST" id="Q15506"/>
<dbReference type="MassIVE" id="Q15506"/>
<dbReference type="PaxDb" id="9606-ENSP00000432305"/>
<dbReference type="PeptideAtlas" id="Q15506"/>
<dbReference type="ProteomicsDB" id="60613"/>
<dbReference type="Pumba" id="Q15506"/>
<dbReference type="TopDownProteomics" id="Q15506"/>
<dbReference type="Antibodypedia" id="32898">
    <property type="antibodies" value="280 antibodies from 25 providers"/>
</dbReference>
<dbReference type="DNASU" id="53340"/>
<dbReference type="Ensembl" id="ENST00000227135.7">
    <property type="protein sequence ID" value="ENSP00000227135.2"/>
    <property type="gene ID" value="ENSG00000064199.7"/>
</dbReference>
<dbReference type="Ensembl" id="ENST00000532692.1">
    <property type="protein sequence ID" value="ENSP00000432305.1"/>
    <property type="gene ID" value="ENSG00000064199.7"/>
</dbReference>
<dbReference type="GeneID" id="53340"/>
<dbReference type="KEGG" id="hsa:53340"/>
<dbReference type="MANE-Select" id="ENST00000227135.7">
    <property type="protein sequence ID" value="ENSP00000227135.2"/>
    <property type="RefSeq nucleotide sequence ID" value="NM_017425.4"/>
    <property type="RefSeq protein sequence ID" value="NP_059121.1"/>
</dbReference>
<dbReference type="UCSC" id="uc001qap.4">
    <property type="organism name" value="human"/>
</dbReference>
<dbReference type="AGR" id="HGNC:11210"/>
<dbReference type="CTD" id="53340"/>
<dbReference type="DisGeNET" id="53340"/>
<dbReference type="GeneCards" id="SPA17"/>
<dbReference type="HGNC" id="HGNC:11210">
    <property type="gene designation" value="SPA17"/>
</dbReference>
<dbReference type="HPA" id="ENSG00000064199">
    <property type="expression patterns" value="Tissue enriched (testis)"/>
</dbReference>
<dbReference type="MIM" id="608621">
    <property type="type" value="gene"/>
</dbReference>
<dbReference type="neXtProt" id="NX_Q15506"/>
<dbReference type="OpenTargets" id="ENSG00000064199"/>
<dbReference type="PharmGKB" id="PA36047"/>
<dbReference type="VEuPathDB" id="HostDB:ENSG00000064199"/>
<dbReference type="eggNOG" id="ENOG502S4R6">
    <property type="taxonomic scope" value="Eukaryota"/>
</dbReference>
<dbReference type="GeneTree" id="ENSGT00440000039164"/>
<dbReference type="HOGENOM" id="CLU_115900_0_0_1"/>
<dbReference type="InParanoid" id="Q15506"/>
<dbReference type="OMA" id="STHYRIP"/>
<dbReference type="OrthoDB" id="252964at2759"/>
<dbReference type="PAN-GO" id="Q15506">
    <property type="GO annotations" value="4 GO annotations based on evolutionary models"/>
</dbReference>
<dbReference type="PhylomeDB" id="Q15506"/>
<dbReference type="TreeFam" id="TF332959"/>
<dbReference type="PathwayCommons" id="Q15506"/>
<dbReference type="SignaLink" id="Q15506"/>
<dbReference type="BioGRID-ORCS" id="53340">
    <property type="hits" value="12 hits in 1118 CRISPR screens"/>
</dbReference>
<dbReference type="ChiTaRS" id="SPA17">
    <property type="organism name" value="human"/>
</dbReference>
<dbReference type="GeneWiki" id="SPA17"/>
<dbReference type="GenomeRNAi" id="53340"/>
<dbReference type="Pharos" id="Q15506">
    <property type="development level" value="Tbio"/>
</dbReference>
<dbReference type="PRO" id="PR:Q15506"/>
<dbReference type="Proteomes" id="UP000005640">
    <property type="component" value="Chromosome 11"/>
</dbReference>
<dbReference type="RNAct" id="Q15506">
    <property type="molecule type" value="protein"/>
</dbReference>
<dbReference type="Bgee" id="ENSG00000064199">
    <property type="expression patterns" value="Expressed in bronchial epithelial cell and 167 other cell types or tissues"/>
</dbReference>
<dbReference type="ExpressionAtlas" id="Q15506">
    <property type="expression patterns" value="baseline and differential"/>
</dbReference>
<dbReference type="GO" id="GO:0005929">
    <property type="term" value="C:cilium"/>
    <property type="evidence" value="ECO:0000314"/>
    <property type="project" value="BHF-UCL"/>
</dbReference>
<dbReference type="GO" id="GO:0005737">
    <property type="term" value="C:cytoplasm"/>
    <property type="evidence" value="ECO:0000314"/>
    <property type="project" value="BHF-UCL"/>
</dbReference>
<dbReference type="GO" id="GO:0009897">
    <property type="term" value="C:external side of plasma membrane"/>
    <property type="evidence" value="ECO:0007669"/>
    <property type="project" value="Ensembl"/>
</dbReference>
<dbReference type="GO" id="GO:0005576">
    <property type="term" value="C:extracellular region"/>
    <property type="evidence" value="ECO:0007669"/>
    <property type="project" value="GOC"/>
</dbReference>
<dbReference type="GO" id="GO:0031514">
    <property type="term" value="C:motile cilium"/>
    <property type="evidence" value="ECO:0000314"/>
    <property type="project" value="BHF-UCL"/>
</dbReference>
<dbReference type="GO" id="GO:0043005">
    <property type="term" value="C:neuron projection"/>
    <property type="evidence" value="ECO:0007669"/>
    <property type="project" value="Ensembl"/>
</dbReference>
<dbReference type="GO" id="GO:0035686">
    <property type="term" value="C:sperm fibrous sheath"/>
    <property type="evidence" value="ECO:0000314"/>
    <property type="project" value="GO_Central"/>
</dbReference>
<dbReference type="GO" id="GO:0097228">
    <property type="term" value="C:sperm principal piece"/>
    <property type="evidence" value="ECO:0000314"/>
    <property type="project" value="GO_Central"/>
</dbReference>
<dbReference type="GO" id="GO:0005516">
    <property type="term" value="F:calmodulin binding"/>
    <property type="evidence" value="ECO:0000318"/>
    <property type="project" value="GO_Central"/>
</dbReference>
<dbReference type="GO" id="GO:0007339">
    <property type="term" value="P:binding of sperm to zona pellucida"/>
    <property type="evidence" value="ECO:0007669"/>
    <property type="project" value="InterPro"/>
</dbReference>
<dbReference type="GO" id="GO:0003351">
    <property type="term" value="P:epithelial cilium movement involved in extracellular fluid movement"/>
    <property type="evidence" value="ECO:0000303"/>
    <property type="project" value="BHF-UCL"/>
</dbReference>
<dbReference type="GO" id="GO:0007338">
    <property type="term" value="P:single fertilization"/>
    <property type="evidence" value="ECO:0000304"/>
    <property type="project" value="ProtInc"/>
</dbReference>
<dbReference type="GO" id="GO:0007283">
    <property type="term" value="P:spermatogenesis"/>
    <property type="evidence" value="ECO:0000304"/>
    <property type="project" value="ProtInc"/>
</dbReference>
<dbReference type="CDD" id="cd12100">
    <property type="entry name" value="DD_CABYR_SP17"/>
    <property type="match status" value="1"/>
</dbReference>
<dbReference type="CDD" id="cd23767">
    <property type="entry name" value="IQCD"/>
    <property type="match status" value="1"/>
</dbReference>
<dbReference type="FunFam" id="1.20.5.190:FF:000045">
    <property type="entry name" value="Sperm surface protein Sp17"/>
    <property type="match status" value="1"/>
</dbReference>
<dbReference type="FunFam" id="1.20.890.10:FF:000006">
    <property type="entry name" value="Sperm surface protein Sp17"/>
    <property type="match status" value="1"/>
</dbReference>
<dbReference type="Gene3D" id="1.20.5.190">
    <property type="match status" value="1"/>
</dbReference>
<dbReference type="Gene3D" id="1.20.890.10">
    <property type="entry name" value="cAMP-dependent protein kinase regulatory subunit, dimerization-anchoring domain"/>
    <property type="match status" value="1"/>
</dbReference>
<dbReference type="InterPro" id="IPR003117">
    <property type="entry name" value="cAMP_dep_PK_reg_su_I/II_a/b"/>
</dbReference>
<dbReference type="InterPro" id="IPR047579">
    <property type="entry name" value="DD_CABYR_SP17"/>
</dbReference>
<dbReference type="InterPro" id="IPR000048">
    <property type="entry name" value="IQ_motif_EF-hand-BS"/>
</dbReference>
<dbReference type="InterPro" id="IPR012105">
    <property type="entry name" value="Sp17"/>
</dbReference>
<dbReference type="PANTHER" id="PTHR10699">
    <property type="entry name" value="NEUROMODULIN"/>
    <property type="match status" value="1"/>
</dbReference>
<dbReference type="PANTHER" id="PTHR10699:SF16">
    <property type="entry name" value="SPERM SURFACE PROTEIN SP17"/>
    <property type="match status" value="1"/>
</dbReference>
<dbReference type="Pfam" id="PF00612">
    <property type="entry name" value="IQ"/>
    <property type="match status" value="1"/>
</dbReference>
<dbReference type="Pfam" id="PF02197">
    <property type="entry name" value="RIIa"/>
    <property type="match status" value="1"/>
</dbReference>
<dbReference type="PIRSF" id="PIRSF016533">
    <property type="entry name" value="Sp17"/>
    <property type="match status" value="1"/>
</dbReference>
<dbReference type="SMART" id="SM00015">
    <property type="entry name" value="IQ"/>
    <property type="match status" value="1"/>
</dbReference>
<dbReference type="SMART" id="SM00394">
    <property type="entry name" value="RIIa"/>
    <property type="match status" value="1"/>
</dbReference>
<dbReference type="SUPFAM" id="SSF47391">
    <property type="entry name" value="Dimerization-anchoring domain of cAMP-dependent PK regulatory subunit"/>
    <property type="match status" value="1"/>
</dbReference>
<dbReference type="PROSITE" id="PS50096">
    <property type="entry name" value="IQ"/>
    <property type="match status" value="1"/>
</dbReference>
<comment type="function">
    <text evidence="1">Sperm surface zona pellucida binding protein. Helps to bind spermatozoa to the zona pellucida with high affinity. Might function in binding zona pellucida and carbohydrates (By similarity).</text>
</comment>
<comment type="subunit">
    <text evidence="1">Homodimer (By similarity). May interact with ROPN1.</text>
</comment>
<comment type="interaction">
    <interactant intactId="EBI-1377865">
        <id>Q15506</id>
    </interactant>
    <interactant intactId="EBI-77797">
        <id>P35609</id>
        <label>ACTN2</label>
    </interactant>
    <organismsDiffer>false</organismsDiffer>
    <experiments>3</experiments>
</comment>
<comment type="interaction">
    <interactant intactId="EBI-1377865">
        <id>Q15506</id>
    </interactant>
    <interactant intactId="EBI-10185182">
        <id>O43687-2</id>
        <label>AKAP7</label>
    </interactant>
    <organismsDiffer>false</organismsDiffer>
    <experiments>6</experiments>
</comment>
<comment type="interaction">
    <interactant intactId="EBI-1377865">
        <id>Q15506</id>
    </interactant>
    <interactant intactId="EBI-358570">
        <id>P14649</id>
        <label>MYL6B</label>
    </interactant>
    <organismsDiffer>false</organismsDiffer>
    <experiments>14</experiments>
</comment>
<comment type="interaction">
    <interactant intactId="EBI-1377865">
        <id>Q15506</id>
    </interactant>
    <interactant intactId="EBI-1378139">
        <id>Q9HAT0</id>
        <label>ROPN1</label>
    </interactant>
    <organismsDiffer>false</organismsDiffer>
    <experiments>9</experiments>
</comment>
<comment type="interaction">
    <interactant intactId="EBI-1377865">
        <id>Q15506</id>
    </interactant>
    <interactant intactId="EBI-9033237">
        <id>Q96C74</id>
        <label>ROPN1L</label>
    </interactant>
    <organismsDiffer>false</organismsDiffer>
    <experiments>5</experiments>
</comment>
<comment type="subcellular location">
    <subcellularLocation>
        <location evidence="4">Membrane</location>
        <topology evidence="4">Peripheral membrane protein</topology>
    </subcellularLocation>
</comment>
<comment type="tissue specificity">
    <text>Testis and sperm specific.</text>
</comment>
<comment type="online information" name="Atlas of Genetics and Cytogenetics in Oncology and Haematology">
    <link uri="https://atlasgeneticsoncology.org/gene/42360/SPA17"/>
</comment>
<name>SP17_HUMAN</name>
<feature type="chain" id="PRO_0000181340" description="Sperm surface protein Sp17">
    <location>
        <begin position="1"/>
        <end position="151"/>
    </location>
</feature>
<feature type="domain" description="IQ" evidence="2">
    <location>
        <begin position="114"/>
        <end position="143"/>
    </location>
</feature>
<feature type="region of interest" description="Disordered" evidence="3">
    <location>
        <begin position="56"/>
        <end position="115"/>
    </location>
</feature>
<feature type="region of interest" description="Disordered" evidence="3">
    <location>
        <begin position="127"/>
        <end position="151"/>
    </location>
</feature>
<feature type="compositionally biased region" description="Basic and acidic residues" evidence="3">
    <location>
        <begin position="62"/>
        <end position="98"/>
    </location>
</feature>
<reference key="1">
    <citation type="journal article" date="1996" name="Biochim. Biophys. Acta">
        <title>Cloning and sequencing of cDNAs encoding the human sperm protein, Sp17.</title>
        <authorList>
            <person name="Lea I.A."/>
            <person name="Richardson R.T."/>
            <person name="Widgren E.E."/>
            <person name="O'Rand M.G."/>
        </authorList>
    </citation>
    <scope>NUCLEOTIDE SEQUENCE [MRNA]</scope>
    <source>
        <tissue>Testis</tissue>
    </source>
</reference>
<reference key="2">
    <citation type="journal article" date="2002" name="Biochim. Biophys. Acta">
        <title>Genomic organization of an intron-containing sperm protein 17 gene (Sp17-1) and an intronless pseudogene (Sp17-2) in humans: a new model.</title>
        <authorList>
            <person name="Buchli R."/>
            <person name="De Jong A."/>
            <person name="Robbins D.L."/>
        </authorList>
    </citation>
    <scope>NUCLEOTIDE SEQUENCE [MRNA]</scope>
    <source>
        <tissue>Testis</tissue>
    </source>
</reference>
<reference key="3">
    <citation type="journal article" date="2004" name="Nat. Genet.">
        <title>Complete sequencing and characterization of 21,243 full-length human cDNAs.</title>
        <authorList>
            <person name="Ota T."/>
            <person name="Suzuki Y."/>
            <person name="Nishikawa T."/>
            <person name="Otsuki T."/>
            <person name="Sugiyama T."/>
            <person name="Irie R."/>
            <person name="Wakamatsu A."/>
            <person name="Hayashi K."/>
            <person name="Sato H."/>
            <person name="Nagai K."/>
            <person name="Kimura K."/>
            <person name="Makita H."/>
            <person name="Sekine M."/>
            <person name="Obayashi M."/>
            <person name="Nishi T."/>
            <person name="Shibahara T."/>
            <person name="Tanaka T."/>
            <person name="Ishii S."/>
            <person name="Yamamoto J."/>
            <person name="Saito K."/>
            <person name="Kawai Y."/>
            <person name="Isono Y."/>
            <person name="Nakamura Y."/>
            <person name="Nagahari K."/>
            <person name="Murakami K."/>
            <person name="Yasuda T."/>
            <person name="Iwayanagi T."/>
            <person name="Wagatsuma M."/>
            <person name="Shiratori A."/>
            <person name="Sudo H."/>
            <person name="Hosoiri T."/>
            <person name="Kaku Y."/>
            <person name="Kodaira H."/>
            <person name="Kondo H."/>
            <person name="Sugawara M."/>
            <person name="Takahashi M."/>
            <person name="Kanda K."/>
            <person name="Yokoi T."/>
            <person name="Furuya T."/>
            <person name="Kikkawa E."/>
            <person name="Omura Y."/>
            <person name="Abe K."/>
            <person name="Kamihara K."/>
            <person name="Katsuta N."/>
            <person name="Sato K."/>
            <person name="Tanikawa M."/>
            <person name="Yamazaki M."/>
            <person name="Ninomiya K."/>
            <person name="Ishibashi T."/>
            <person name="Yamashita H."/>
            <person name="Murakawa K."/>
            <person name="Fujimori K."/>
            <person name="Tanai H."/>
            <person name="Kimata M."/>
            <person name="Watanabe M."/>
            <person name="Hiraoka S."/>
            <person name="Chiba Y."/>
            <person name="Ishida S."/>
            <person name="Ono Y."/>
            <person name="Takiguchi S."/>
            <person name="Watanabe S."/>
            <person name="Yosida M."/>
            <person name="Hotuta T."/>
            <person name="Kusano J."/>
            <person name="Kanehori K."/>
            <person name="Takahashi-Fujii A."/>
            <person name="Hara H."/>
            <person name="Tanase T.-O."/>
            <person name="Nomura Y."/>
            <person name="Togiya S."/>
            <person name="Komai F."/>
            <person name="Hara R."/>
            <person name="Takeuchi K."/>
            <person name="Arita M."/>
            <person name="Imose N."/>
            <person name="Musashino K."/>
            <person name="Yuuki H."/>
            <person name="Oshima A."/>
            <person name="Sasaki N."/>
            <person name="Aotsuka S."/>
            <person name="Yoshikawa Y."/>
            <person name="Matsunawa H."/>
            <person name="Ichihara T."/>
            <person name="Shiohata N."/>
            <person name="Sano S."/>
            <person name="Moriya S."/>
            <person name="Momiyama H."/>
            <person name="Satoh N."/>
            <person name="Takami S."/>
            <person name="Terashima Y."/>
            <person name="Suzuki O."/>
            <person name="Nakagawa S."/>
            <person name="Senoh A."/>
            <person name="Mizoguchi H."/>
            <person name="Goto Y."/>
            <person name="Shimizu F."/>
            <person name="Wakebe H."/>
            <person name="Hishigaki H."/>
            <person name="Watanabe T."/>
            <person name="Sugiyama A."/>
            <person name="Takemoto M."/>
            <person name="Kawakami B."/>
            <person name="Yamazaki M."/>
            <person name="Watanabe K."/>
            <person name="Kumagai A."/>
            <person name="Itakura S."/>
            <person name="Fukuzumi Y."/>
            <person name="Fujimori Y."/>
            <person name="Komiyama M."/>
            <person name="Tashiro H."/>
            <person name="Tanigami A."/>
            <person name="Fujiwara T."/>
            <person name="Ono T."/>
            <person name="Yamada K."/>
            <person name="Fujii Y."/>
            <person name="Ozaki K."/>
            <person name="Hirao M."/>
            <person name="Ohmori Y."/>
            <person name="Kawabata A."/>
            <person name="Hikiji T."/>
            <person name="Kobatake N."/>
            <person name="Inagaki H."/>
            <person name="Ikema Y."/>
            <person name="Okamoto S."/>
            <person name="Okitani R."/>
            <person name="Kawakami T."/>
            <person name="Noguchi S."/>
            <person name="Itoh T."/>
            <person name="Shigeta K."/>
            <person name="Senba T."/>
            <person name="Matsumura K."/>
            <person name="Nakajima Y."/>
            <person name="Mizuno T."/>
            <person name="Morinaga M."/>
            <person name="Sasaki M."/>
            <person name="Togashi T."/>
            <person name="Oyama M."/>
            <person name="Hata H."/>
            <person name="Watanabe M."/>
            <person name="Komatsu T."/>
            <person name="Mizushima-Sugano J."/>
            <person name="Satoh T."/>
            <person name="Shirai Y."/>
            <person name="Takahashi Y."/>
            <person name="Nakagawa K."/>
            <person name="Okumura K."/>
            <person name="Nagase T."/>
            <person name="Nomura N."/>
            <person name="Kikuchi H."/>
            <person name="Masuho Y."/>
            <person name="Yamashita R."/>
            <person name="Nakai K."/>
            <person name="Yada T."/>
            <person name="Nakamura Y."/>
            <person name="Ohara O."/>
            <person name="Isogai T."/>
            <person name="Sugano S."/>
        </authorList>
    </citation>
    <scope>NUCLEOTIDE SEQUENCE [LARGE SCALE MRNA]</scope>
    <source>
        <tissue>Testis</tissue>
    </source>
</reference>
<reference key="4">
    <citation type="submission" date="2005-07" db="EMBL/GenBank/DDBJ databases">
        <authorList>
            <person name="Mural R.J."/>
            <person name="Istrail S."/>
            <person name="Sutton G.G."/>
            <person name="Florea L."/>
            <person name="Halpern A.L."/>
            <person name="Mobarry C.M."/>
            <person name="Lippert R."/>
            <person name="Walenz B."/>
            <person name="Shatkay H."/>
            <person name="Dew I."/>
            <person name="Miller J.R."/>
            <person name="Flanigan M.J."/>
            <person name="Edwards N.J."/>
            <person name="Bolanos R."/>
            <person name="Fasulo D."/>
            <person name="Halldorsson B.V."/>
            <person name="Hannenhalli S."/>
            <person name="Turner R."/>
            <person name="Yooseph S."/>
            <person name="Lu F."/>
            <person name="Nusskern D.R."/>
            <person name="Shue B.C."/>
            <person name="Zheng X.H."/>
            <person name="Zhong F."/>
            <person name="Delcher A.L."/>
            <person name="Huson D.H."/>
            <person name="Kravitz S.A."/>
            <person name="Mouchard L."/>
            <person name="Reinert K."/>
            <person name="Remington K.A."/>
            <person name="Clark A.G."/>
            <person name="Waterman M.S."/>
            <person name="Eichler E.E."/>
            <person name="Adams M.D."/>
            <person name="Hunkapiller M.W."/>
            <person name="Myers E.W."/>
            <person name="Venter J.C."/>
        </authorList>
    </citation>
    <scope>NUCLEOTIDE SEQUENCE [LARGE SCALE GENOMIC DNA]</scope>
</reference>
<reference key="5">
    <citation type="journal article" date="2004" name="Genome Res.">
        <title>The status, quality, and expansion of the NIH full-length cDNA project: the Mammalian Gene Collection (MGC).</title>
        <authorList>
            <consortium name="The MGC Project Team"/>
        </authorList>
    </citation>
    <scope>NUCLEOTIDE SEQUENCE [LARGE SCALE MRNA]</scope>
    <source>
        <tissue>Brain</tissue>
    </source>
</reference>
<reference key="6">
    <citation type="journal article" date="2007" name="Int. J. Cancer">
        <title>A yeast two-hybrid system using Sp17 identified ropporin as a novel cancer-testis antigen in hematologic malignancies.</title>
        <authorList>
            <person name="Li Z."/>
            <person name="Li W."/>
            <person name="Meklat F."/>
            <person name="Wang Z."/>
            <person name="Zhang J."/>
            <person name="Zhang Y."/>
            <person name="Lim S.H."/>
        </authorList>
    </citation>
    <scope>POSSIBLE INTERACTION WITH ROPN1</scope>
</reference>
<evidence type="ECO:0000250" key="1"/>
<evidence type="ECO:0000255" key="2">
    <source>
        <dbReference type="PROSITE-ProRule" id="PRU00116"/>
    </source>
</evidence>
<evidence type="ECO:0000256" key="3">
    <source>
        <dbReference type="SAM" id="MobiDB-lite"/>
    </source>
</evidence>
<evidence type="ECO:0000305" key="4"/>
<sequence>MSIPFSNTHYRIPQGFGNLLEGLTREILREQPDNIPAFAAAYFESLLEKREKTNFDPAEWGSKVEDRFYNNHAFEEQEPPEKSDPKQEESQISGKEEETSVTILDSSEEDKEKEEVAAVKIQAAFRGHIAREEAKKMKTNSLQNEEKEENK</sequence>